<keyword id="KW-0217">Developmental protein</keyword>
<keyword id="KW-1015">Disulfide bond</keyword>
<keyword id="KW-1185">Reference proteome</keyword>
<keyword id="KW-0964">Secreted</keyword>
<keyword id="KW-0732">Signal</keyword>
<evidence type="ECO:0000250" key="1"/>
<evidence type="ECO:0000255" key="2"/>
<evidence type="ECO:0000303" key="3">
    <source>
    </source>
</evidence>
<evidence type="ECO:0000303" key="4">
    <source>
    </source>
</evidence>
<evidence type="ECO:0000305" key="5"/>
<evidence type="ECO:0000312" key="6">
    <source>
        <dbReference type="Araport" id="AT5G10310"/>
    </source>
</evidence>
<comment type="function">
    <text evidence="1">Controls stomatal patterning.</text>
</comment>
<comment type="subcellular location">
    <subcellularLocation>
        <location evidence="5">Secreted</location>
    </subcellularLocation>
</comment>
<comment type="similarity">
    <text evidence="5">Belongs to the plant cysteine rich small secretory peptide family. Epidermal patterning factor subfamily.</text>
</comment>
<reference key="1">
    <citation type="journal article" date="2000" name="Nature">
        <title>Sequence and analysis of chromosome 5 of the plant Arabidopsis thaliana.</title>
        <authorList>
            <person name="Tabata S."/>
            <person name="Kaneko T."/>
            <person name="Nakamura Y."/>
            <person name="Kotani H."/>
            <person name="Kato T."/>
            <person name="Asamizu E."/>
            <person name="Miyajima N."/>
            <person name="Sasamoto S."/>
            <person name="Kimura T."/>
            <person name="Hosouchi T."/>
            <person name="Kawashima K."/>
            <person name="Kohara M."/>
            <person name="Matsumoto M."/>
            <person name="Matsuno A."/>
            <person name="Muraki A."/>
            <person name="Nakayama S."/>
            <person name="Nakazaki N."/>
            <person name="Naruo K."/>
            <person name="Okumura S."/>
            <person name="Shinpo S."/>
            <person name="Takeuchi C."/>
            <person name="Wada T."/>
            <person name="Watanabe A."/>
            <person name="Yamada M."/>
            <person name="Yasuda M."/>
            <person name="Sato S."/>
            <person name="de la Bastide M."/>
            <person name="Huang E."/>
            <person name="Spiegel L."/>
            <person name="Gnoj L."/>
            <person name="O'Shaughnessy A."/>
            <person name="Preston R."/>
            <person name="Habermann K."/>
            <person name="Murray J."/>
            <person name="Johnson D."/>
            <person name="Rohlfing T."/>
            <person name="Nelson J."/>
            <person name="Stoneking T."/>
            <person name="Pepin K."/>
            <person name="Spieth J."/>
            <person name="Sekhon M."/>
            <person name="Armstrong J."/>
            <person name="Becker M."/>
            <person name="Belter E."/>
            <person name="Cordum H."/>
            <person name="Cordes M."/>
            <person name="Courtney L."/>
            <person name="Courtney W."/>
            <person name="Dante M."/>
            <person name="Du H."/>
            <person name="Edwards J."/>
            <person name="Fryman J."/>
            <person name="Haakensen B."/>
            <person name="Lamar E."/>
            <person name="Latreille P."/>
            <person name="Leonard S."/>
            <person name="Meyer R."/>
            <person name="Mulvaney E."/>
            <person name="Ozersky P."/>
            <person name="Riley A."/>
            <person name="Strowmatt C."/>
            <person name="Wagner-McPherson C."/>
            <person name="Wollam A."/>
            <person name="Yoakum M."/>
            <person name="Bell M."/>
            <person name="Dedhia N."/>
            <person name="Parnell L."/>
            <person name="Shah R."/>
            <person name="Rodriguez M."/>
            <person name="Hoon See L."/>
            <person name="Vil D."/>
            <person name="Baker J."/>
            <person name="Kirchoff K."/>
            <person name="Toth K."/>
            <person name="King L."/>
            <person name="Bahret A."/>
            <person name="Miller B."/>
            <person name="Marra M.A."/>
            <person name="Martienssen R."/>
            <person name="McCombie W.R."/>
            <person name="Wilson R.K."/>
            <person name="Murphy G."/>
            <person name="Bancroft I."/>
            <person name="Volckaert G."/>
            <person name="Wambutt R."/>
            <person name="Duesterhoeft A."/>
            <person name="Stiekema W."/>
            <person name="Pohl T."/>
            <person name="Entian K.-D."/>
            <person name="Terryn N."/>
            <person name="Hartley N."/>
            <person name="Bent E."/>
            <person name="Johnson S."/>
            <person name="Langham S.-A."/>
            <person name="McCullagh B."/>
            <person name="Robben J."/>
            <person name="Grymonprez B."/>
            <person name="Zimmermann W."/>
            <person name="Ramsperger U."/>
            <person name="Wedler H."/>
            <person name="Balke K."/>
            <person name="Wedler E."/>
            <person name="Peters S."/>
            <person name="van Staveren M."/>
            <person name="Dirkse W."/>
            <person name="Mooijman P."/>
            <person name="Klein Lankhorst R."/>
            <person name="Weitzenegger T."/>
            <person name="Bothe G."/>
            <person name="Rose M."/>
            <person name="Hauf J."/>
            <person name="Berneiser S."/>
            <person name="Hempel S."/>
            <person name="Feldpausch M."/>
            <person name="Lamberth S."/>
            <person name="Villarroel R."/>
            <person name="Gielen J."/>
            <person name="Ardiles W."/>
            <person name="Bents O."/>
            <person name="Lemcke K."/>
            <person name="Kolesov G."/>
            <person name="Mayer K.F.X."/>
            <person name="Rudd S."/>
            <person name="Schoof H."/>
            <person name="Schueller C."/>
            <person name="Zaccaria P."/>
            <person name="Mewes H.-W."/>
            <person name="Bevan M."/>
            <person name="Fransz P.F."/>
        </authorList>
    </citation>
    <scope>NUCLEOTIDE SEQUENCE [LARGE SCALE GENOMIC DNA]</scope>
    <source>
        <strain>cv. Columbia</strain>
    </source>
</reference>
<reference key="2">
    <citation type="journal article" date="2017" name="Plant J.">
        <title>Araport11: a complete reannotation of the Arabidopsis thaliana reference genome.</title>
        <authorList>
            <person name="Cheng C.Y."/>
            <person name="Krishnakumar V."/>
            <person name="Chan A.P."/>
            <person name="Thibaud-Nissen F."/>
            <person name="Schobel S."/>
            <person name="Town C.D."/>
        </authorList>
    </citation>
    <scope>GENOME REANNOTATION</scope>
    <source>
        <strain>cv. Columbia</strain>
    </source>
</reference>
<reference key="3">
    <citation type="submission" date="2004-01" db="EMBL/GenBank/DDBJ databases">
        <title>Arabidopsis ORF clones.</title>
        <authorList>
            <person name="Cheuk R.F."/>
            <person name="Chen H."/>
            <person name="Kim C.J."/>
            <person name="Shinn P."/>
            <person name="Ecker J.R."/>
        </authorList>
    </citation>
    <scope>NUCLEOTIDE SEQUENCE [LARGE SCALE MRNA]</scope>
    <source>
        <strain>cv. Columbia</strain>
    </source>
</reference>
<reference key="4">
    <citation type="journal article" date="2009" name="Plant Cell Physiol.">
        <title>Epidermal cell density is autoregulated via a secretory peptide, EPIDERMAL PATTERNING FACTOR 2 in Arabidopsis leaves.</title>
        <authorList>
            <person name="Hara K."/>
            <person name="Yokoo T."/>
            <person name="Kajita R."/>
            <person name="Onishi T."/>
            <person name="Yahata S."/>
            <person name="Peterson K.M."/>
            <person name="Torii K.U."/>
            <person name="Kakimoto T."/>
        </authorList>
    </citation>
    <scope>GENE FAMILY</scope>
    <scope>NOMENCLATURE</scope>
</reference>
<reference key="5">
    <citation type="journal article" date="2011" name="Nat. Commun.">
        <title>The NMR structure of stomagen reveals the basis of stomatal density regulation by plant peptide hormones.</title>
        <authorList>
            <person name="Ohki S."/>
            <person name="Takeuchi M."/>
            <person name="Mori M."/>
        </authorList>
    </citation>
    <scope>3D-STRUCTURE MODELING</scope>
    <scope>DISULFIDE BOND</scope>
</reference>
<accession>Q9LFT5</accession>
<gene>
    <name evidence="3" type="primary">EPFL1</name>
    <name evidence="6" type="ordered locus">At5g10310</name>
    <name type="ORF">F18D22.80</name>
</gene>
<sequence length="122" mass="13652">MFAIYKSTLLLLPLILILLITPQVSSFLQPIQPPISPQVALIEDKARLGSTPPSCHNRCNNCHPCMAIQVPTLPTRSRFTRVNPFSGGFVRPPSSLTTVLDQYSNYKPMGWKCHCNGHFYNP</sequence>
<proteinExistence type="evidence at protein level"/>
<dbReference type="EMBL" id="AL360334">
    <property type="protein sequence ID" value="CAB96687.1"/>
    <property type="molecule type" value="Genomic_DNA"/>
</dbReference>
<dbReference type="EMBL" id="CP002688">
    <property type="protein sequence ID" value="AED91519.1"/>
    <property type="molecule type" value="Genomic_DNA"/>
</dbReference>
<dbReference type="EMBL" id="BT010810">
    <property type="protein sequence ID" value="AAR24177.1"/>
    <property type="molecule type" value="mRNA"/>
</dbReference>
<dbReference type="EMBL" id="BT011282">
    <property type="protein sequence ID" value="AAR92318.1"/>
    <property type="molecule type" value="mRNA"/>
</dbReference>
<dbReference type="PIR" id="T50819">
    <property type="entry name" value="T50819"/>
</dbReference>
<dbReference type="RefSeq" id="NP_196593.1">
    <property type="nucleotide sequence ID" value="NM_121069.4"/>
</dbReference>
<dbReference type="SMR" id="Q9LFT5"/>
<dbReference type="FunCoup" id="Q9LFT5">
    <property type="interactions" value="85"/>
</dbReference>
<dbReference type="STRING" id="3702.Q9LFT5"/>
<dbReference type="PaxDb" id="3702-AT5G10310.1"/>
<dbReference type="EnsemblPlants" id="AT5G10310.1">
    <property type="protein sequence ID" value="AT5G10310.1"/>
    <property type="gene ID" value="AT5G10310"/>
</dbReference>
<dbReference type="GeneID" id="830895"/>
<dbReference type="Gramene" id="AT5G10310.1">
    <property type="protein sequence ID" value="AT5G10310.1"/>
    <property type="gene ID" value="AT5G10310"/>
</dbReference>
<dbReference type="KEGG" id="ath:AT5G10310"/>
<dbReference type="Araport" id="AT5G10310"/>
<dbReference type="TAIR" id="AT5G10310">
    <property type="gene designation" value="ATEPFL1"/>
</dbReference>
<dbReference type="eggNOG" id="ENOG502SAGJ">
    <property type="taxonomic scope" value="Eukaryota"/>
</dbReference>
<dbReference type="HOGENOM" id="CLU_135272_2_0_1"/>
<dbReference type="InParanoid" id="Q9LFT5"/>
<dbReference type="OMA" id="NSKINMF"/>
<dbReference type="OrthoDB" id="1922142at2759"/>
<dbReference type="PhylomeDB" id="Q9LFT5"/>
<dbReference type="PRO" id="PR:Q9LFT5"/>
<dbReference type="Proteomes" id="UP000006548">
    <property type="component" value="Chromosome 5"/>
</dbReference>
<dbReference type="ExpressionAtlas" id="Q9LFT5">
    <property type="expression patterns" value="baseline and differential"/>
</dbReference>
<dbReference type="GO" id="GO:0005576">
    <property type="term" value="C:extracellular region"/>
    <property type="evidence" value="ECO:0007669"/>
    <property type="project" value="UniProtKB-SubCell"/>
</dbReference>
<dbReference type="GO" id="GO:0010052">
    <property type="term" value="P:guard cell differentiation"/>
    <property type="evidence" value="ECO:0000250"/>
    <property type="project" value="UniProtKB"/>
</dbReference>
<dbReference type="GO" id="GO:0010374">
    <property type="term" value="P:stomatal complex development"/>
    <property type="evidence" value="ECO:0000250"/>
    <property type="project" value="UniProtKB"/>
</dbReference>
<dbReference type="InterPro" id="IPR039455">
    <property type="entry name" value="EPFL"/>
</dbReference>
<dbReference type="PANTHER" id="PTHR33109:SF102">
    <property type="entry name" value="EPIDERMAL PATTERNING FACTOR-LIKE PROTEIN 1"/>
    <property type="match status" value="1"/>
</dbReference>
<dbReference type="PANTHER" id="PTHR33109">
    <property type="entry name" value="EPIDERMAL PATTERNING FACTOR-LIKE PROTEIN 4"/>
    <property type="match status" value="1"/>
</dbReference>
<dbReference type="Pfam" id="PF17181">
    <property type="entry name" value="EPF"/>
    <property type="match status" value="1"/>
</dbReference>
<protein>
    <recommendedName>
        <fullName evidence="3">EPIDERMAL PATTERNING FACTOR-like protein 1</fullName>
        <shortName>EPF-like protein 1</shortName>
    </recommendedName>
    <component>
        <recommendedName>
            <fullName evidence="5">MEPFL1</fullName>
        </recommendedName>
    </component>
</protein>
<feature type="signal peptide" evidence="2">
    <location>
        <begin position="1"/>
        <end position="26"/>
    </location>
</feature>
<feature type="chain" id="PRO_0000392499" description="EPIDERMAL PATTERNING FACTOR-like protein 1">
    <location>
        <begin position="27"/>
        <end position="122"/>
    </location>
</feature>
<feature type="chain" id="PRO_0000430507" description="MEPFL1" evidence="4">
    <location>
        <begin position="48"/>
        <end position="122"/>
    </location>
</feature>
<feature type="disulfide bond" evidence="4">
    <location>
        <begin position="55"/>
        <end position="113"/>
    </location>
</feature>
<feature type="disulfide bond" evidence="4">
    <location>
        <begin position="59"/>
        <end position="65"/>
    </location>
</feature>
<feature type="disulfide bond" evidence="4">
    <location>
        <begin position="62"/>
        <end position="115"/>
    </location>
</feature>
<organism>
    <name type="scientific">Arabidopsis thaliana</name>
    <name type="common">Mouse-ear cress</name>
    <dbReference type="NCBI Taxonomy" id="3702"/>
    <lineage>
        <taxon>Eukaryota</taxon>
        <taxon>Viridiplantae</taxon>
        <taxon>Streptophyta</taxon>
        <taxon>Embryophyta</taxon>
        <taxon>Tracheophyta</taxon>
        <taxon>Spermatophyta</taxon>
        <taxon>Magnoliopsida</taxon>
        <taxon>eudicotyledons</taxon>
        <taxon>Gunneridae</taxon>
        <taxon>Pentapetalae</taxon>
        <taxon>rosids</taxon>
        <taxon>malvids</taxon>
        <taxon>Brassicales</taxon>
        <taxon>Brassicaceae</taxon>
        <taxon>Camelineae</taxon>
        <taxon>Arabidopsis</taxon>
    </lineage>
</organism>
<name>EPFL1_ARATH</name>